<keyword id="KW-0067">ATP-binding</keyword>
<keyword id="KW-0436">Ligase</keyword>
<keyword id="KW-0547">Nucleotide-binding</keyword>
<keyword id="KW-0554">One-carbon metabolism</keyword>
<keyword id="KW-1185">Reference proteome</keyword>
<feature type="chain" id="PRO_0000199382" description="Formate--tetrahydrofolate ligase">
    <location>
        <begin position="1"/>
        <end position="555"/>
    </location>
</feature>
<feature type="binding site" evidence="1">
    <location>
        <begin position="65"/>
        <end position="72"/>
    </location>
    <ligand>
        <name>ATP</name>
        <dbReference type="ChEBI" id="CHEBI:30616"/>
    </ligand>
</feature>
<dbReference type="EC" id="6.3.4.3" evidence="1"/>
<dbReference type="EMBL" id="CP000029">
    <property type="protein sequence ID" value="AAW54703.1"/>
    <property type="molecule type" value="Genomic_DNA"/>
</dbReference>
<dbReference type="RefSeq" id="WP_002440219.1">
    <property type="nucleotide sequence ID" value="NC_002976.3"/>
</dbReference>
<dbReference type="SMR" id="Q5HNH4"/>
<dbReference type="STRING" id="176279.SERP1295"/>
<dbReference type="KEGG" id="ser:SERP1295"/>
<dbReference type="eggNOG" id="COG2759">
    <property type="taxonomic scope" value="Bacteria"/>
</dbReference>
<dbReference type="HOGENOM" id="CLU_003601_3_3_9"/>
<dbReference type="UniPathway" id="UPA00193"/>
<dbReference type="Proteomes" id="UP000000531">
    <property type="component" value="Chromosome"/>
</dbReference>
<dbReference type="GO" id="GO:0005524">
    <property type="term" value="F:ATP binding"/>
    <property type="evidence" value="ECO:0007669"/>
    <property type="project" value="UniProtKB-UniRule"/>
</dbReference>
<dbReference type="GO" id="GO:0004329">
    <property type="term" value="F:formate-tetrahydrofolate ligase activity"/>
    <property type="evidence" value="ECO:0007669"/>
    <property type="project" value="UniProtKB-UniRule"/>
</dbReference>
<dbReference type="GO" id="GO:0035999">
    <property type="term" value="P:tetrahydrofolate interconversion"/>
    <property type="evidence" value="ECO:0007669"/>
    <property type="project" value="UniProtKB-UniRule"/>
</dbReference>
<dbReference type="CDD" id="cd00477">
    <property type="entry name" value="FTHFS"/>
    <property type="match status" value="1"/>
</dbReference>
<dbReference type="FunFam" id="3.30.1510.10:FF:000001">
    <property type="entry name" value="Formate--tetrahydrofolate ligase"/>
    <property type="match status" value="1"/>
</dbReference>
<dbReference type="FunFam" id="3.10.410.10:FF:000001">
    <property type="entry name" value="Putative formate--tetrahydrofolate ligase"/>
    <property type="match status" value="1"/>
</dbReference>
<dbReference type="Gene3D" id="3.30.1510.10">
    <property type="entry name" value="Domain 2, N(10)-formyltetrahydrofolate synthetase"/>
    <property type="match status" value="1"/>
</dbReference>
<dbReference type="Gene3D" id="3.10.410.10">
    <property type="entry name" value="Formyltetrahydrofolate synthetase, domain 3"/>
    <property type="match status" value="1"/>
</dbReference>
<dbReference type="Gene3D" id="3.40.50.300">
    <property type="entry name" value="P-loop containing nucleotide triphosphate hydrolases"/>
    <property type="match status" value="1"/>
</dbReference>
<dbReference type="HAMAP" id="MF_01543">
    <property type="entry name" value="FTHFS"/>
    <property type="match status" value="1"/>
</dbReference>
<dbReference type="InterPro" id="IPR000559">
    <property type="entry name" value="Formate_THF_ligase"/>
</dbReference>
<dbReference type="InterPro" id="IPR020628">
    <property type="entry name" value="Formate_THF_ligase_CS"/>
</dbReference>
<dbReference type="InterPro" id="IPR027417">
    <property type="entry name" value="P-loop_NTPase"/>
</dbReference>
<dbReference type="NCBIfam" id="NF010030">
    <property type="entry name" value="PRK13505.1"/>
    <property type="match status" value="1"/>
</dbReference>
<dbReference type="Pfam" id="PF01268">
    <property type="entry name" value="FTHFS"/>
    <property type="match status" value="1"/>
</dbReference>
<dbReference type="SUPFAM" id="SSF52540">
    <property type="entry name" value="P-loop containing nucleoside triphosphate hydrolases"/>
    <property type="match status" value="1"/>
</dbReference>
<dbReference type="PROSITE" id="PS00721">
    <property type="entry name" value="FTHFS_1"/>
    <property type="match status" value="1"/>
</dbReference>
<dbReference type="PROSITE" id="PS00722">
    <property type="entry name" value="FTHFS_2"/>
    <property type="match status" value="1"/>
</dbReference>
<name>FTHS_STAEQ</name>
<accession>Q5HNH4</accession>
<protein>
    <recommendedName>
        <fullName evidence="1">Formate--tetrahydrofolate ligase</fullName>
        <ecNumber evidence="1">6.3.4.3</ecNumber>
    </recommendedName>
    <alternativeName>
        <fullName evidence="1">Formyltetrahydrofolate synthetase</fullName>
        <shortName evidence="1">FHS</shortName>
        <shortName evidence="1">FTHFS</shortName>
    </alternativeName>
</protein>
<evidence type="ECO:0000255" key="1">
    <source>
        <dbReference type="HAMAP-Rule" id="MF_01543"/>
    </source>
</evidence>
<comment type="catalytic activity">
    <reaction evidence="1">
        <text>(6S)-5,6,7,8-tetrahydrofolate + formate + ATP = (6R)-10-formyltetrahydrofolate + ADP + phosphate</text>
        <dbReference type="Rhea" id="RHEA:20221"/>
        <dbReference type="ChEBI" id="CHEBI:15740"/>
        <dbReference type="ChEBI" id="CHEBI:30616"/>
        <dbReference type="ChEBI" id="CHEBI:43474"/>
        <dbReference type="ChEBI" id="CHEBI:57453"/>
        <dbReference type="ChEBI" id="CHEBI:195366"/>
        <dbReference type="ChEBI" id="CHEBI:456216"/>
        <dbReference type="EC" id="6.3.4.3"/>
    </reaction>
</comment>
<comment type="pathway">
    <text evidence="1">One-carbon metabolism; tetrahydrofolate interconversion.</text>
</comment>
<comment type="similarity">
    <text evidence="1">Belongs to the formate--tetrahydrofolate ligase family.</text>
</comment>
<organism>
    <name type="scientific">Staphylococcus epidermidis (strain ATCC 35984 / DSM 28319 / BCRC 17069 / CCUG 31568 / BM 3577 / RP62A)</name>
    <dbReference type="NCBI Taxonomy" id="176279"/>
    <lineage>
        <taxon>Bacteria</taxon>
        <taxon>Bacillati</taxon>
        <taxon>Bacillota</taxon>
        <taxon>Bacilli</taxon>
        <taxon>Bacillales</taxon>
        <taxon>Staphylococcaceae</taxon>
        <taxon>Staphylococcus</taxon>
    </lineage>
</organism>
<gene>
    <name evidence="1" type="primary">fhs</name>
    <name type="ordered locus">SERP1295</name>
</gene>
<sequence>MAQLSDLEIANLSKLKPISEIARKVGITEDALEPYGHYKAKIDINQIQEQEKKGKVVLVTAMSPTPAGEGKSTVTVGLADAFNKLNHNVTVALREPALGPTFGIKGGATGGGYAQVLPMEDINLHFNGDFHAITTANNALSAFIDNHLHQGNELGIDQRRIEWKRVLDMNDRALRHVNVGLGGTTHGVPREDGFNITVASEIMAILCLSRNIKDLKEKISRITIGYTRHHKPITVSDLKVEGALTLILKDAIKPNLVQTIEGTPALVHGGPFANIAHGCNSILATETARNLSDIVVTEAGFGSDLGAEKFMNIKAREAGFDPSAVVVVATIRALKMHGGVAKDQLQHENIEAVEAGLVNLERHVNNIKKYGVEPIVALNAFIHDTPSETACVKQWAKDNQVRIALTEVWEKGGEGGIELANQVFDVMQEPQNFKHLYELKQPLEAKIETIVKEIYGGSKVNFSSKAQKQLKQFKENGWDEYPICMAKTQYSFSDDQTLLGAPNDFEITIRELEAKTGAGFIVALTGAIMTMPGLPKKPAALNMDVTDDGKAIGLF</sequence>
<proteinExistence type="inferred from homology"/>
<reference key="1">
    <citation type="journal article" date="2005" name="J. Bacteriol.">
        <title>Insights on evolution of virulence and resistance from the complete genome analysis of an early methicillin-resistant Staphylococcus aureus strain and a biofilm-producing methicillin-resistant Staphylococcus epidermidis strain.</title>
        <authorList>
            <person name="Gill S.R."/>
            <person name="Fouts D.E."/>
            <person name="Archer G.L."/>
            <person name="Mongodin E.F."/>
            <person name="DeBoy R.T."/>
            <person name="Ravel J."/>
            <person name="Paulsen I.T."/>
            <person name="Kolonay J.F."/>
            <person name="Brinkac L.M."/>
            <person name="Beanan M.J."/>
            <person name="Dodson R.J."/>
            <person name="Daugherty S.C."/>
            <person name="Madupu R."/>
            <person name="Angiuoli S.V."/>
            <person name="Durkin A.S."/>
            <person name="Haft D.H."/>
            <person name="Vamathevan J.J."/>
            <person name="Khouri H."/>
            <person name="Utterback T.R."/>
            <person name="Lee C."/>
            <person name="Dimitrov G."/>
            <person name="Jiang L."/>
            <person name="Qin H."/>
            <person name="Weidman J."/>
            <person name="Tran K."/>
            <person name="Kang K.H."/>
            <person name="Hance I.R."/>
            <person name="Nelson K.E."/>
            <person name="Fraser C.M."/>
        </authorList>
    </citation>
    <scope>NUCLEOTIDE SEQUENCE [LARGE SCALE GENOMIC DNA]</scope>
    <source>
        <strain>ATCC 35984 / DSM 28319 / BCRC 17069 / CCUG 31568 / BM 3577 / RP62A</strain>
    </source>
</reference>